<protein>
    <recommendedName>
        <fullName evidence="1">UPF0122 protein SpyM50882</fullName>
    </recommendedName>
</protein>
<gene>
    <name type="ordered locus">SpyM50882</name>
</gene>
<accession>A2RED5</accession>
<proteinExistence type="inferred from homology"/>
<organism>
    <name type="scientific">Streptococcus pyogenes serotype M5 (strain Manfredo)</name>
    <dbReference type="NCBI Taxonomy" id="160491"/>
    <lineage>
        <taxon>Bacteria</taxon>
        <taxon>Bacillati</taxon>
        <taxon>Bacillota</taxon>
        <taxon>Bacilli</taxon>
        <taxon>Lactobacillales</taxon>
        <taxon>Streptococcaceae</taxon>
        <taxon>Streptococcus</taxon>
    </lineage>
</organism>
<sequence>MNIMEIEKTNRMNALFEFYAALLTDKQMNYIELYYADDYSLAEIADEFGVSRQAVYDNIKRTEKILETYEMKLHMYSDYVVRSEIFDDMIAHYPHDEYLQEKISILTSIDNRE</sequence>
<evidence type="ECO:0000255" key="1">
    <source>
        <dbReference type="HAMAP-Rule" id="MF_00245"/>
    </source>
</evidence>
<feature type="chain" id="PRO_1000012548" description="UPF0122 protein SpyM50882">
    <location>
        <begin position="1"/>
        <end position="113"/>
    </location>
</feature>
<dbReference type="EMBL" id="AM295007">
    <property type="protein sequence ID" value="CAM30210.1"/>
    <property type="molecule type" value="Genomic_DNA"/>
</dbReference>
<dbReference type="SMR" id="A2RED5"/>
<dbReference type="KEGG" id="spf:SpyM50882"/>
<dbReference type="HOGENOM" id="CLU_129218_1_1_9"/>
<dbReference type="Gene3D" id="1.10.10.10">
    <property type="entry name" value="Winged helix-like DNA-binding domain superfamily/Winged helix DNA-binding domain"/>
    <property type="match status" value="1"/>
</dbReference>
<dbReference type="HAMAP" id="MF_00245">
    <property type="entry name" value="UPF0122"/>
    <property type="match status" value="1"/>
</dbReference>
<dbReference type="InterPro" id="IPR013324">
    <property type="entry name" value="RNA_pol_sigma_r3/r4-like"/>
</dbReference>
<dbReference type="InterPro" id="IPR007394">
    <property type="entry name" value="UPF0122"/>
</dbReference>
<dbReference type="InterPro" id="IPR054831">
    <property type="entry name" value="UPF0122_fam_protein"/>
</dbReference>
<dbReference type="InterPro" id="IPR036388">
    <property type="entry name" value="WH-like_DNA-bd_sf"/>
</dbReference>
<dbReference type="NCBIfam" id="NF001066">
    <property type="entry name" value="PRK00118.1-1"/>
    <property type="match status" value="1"/>
</dbReference>
<dbReference type="NCBIfam" id="NF001068">
    <property type="entry name" value="PRK00118.1-4"/>
    <property type="match status" value="1"/>
</dbReference>
<dbReference type="NCBIfam" id="NF001070">
    <property type="entry name" value="PRK00118.1-6"/>
    <property type="match status" value="1"/>
</dbReference>
<dbReference type="NCBIfam" id="NF045758">
    <property type="entry name" value="YlxM"/>
    <property type="match status" value="1"/>
</dbReference>
<dbReference type="PANTHER" id="PTHR40083">
    <property type="entry name" value="UPF0122 PROTEIN CBO2450/CLC_2298"/>
    <property type="match status" value="1"/>
</dbReference>
<dbReference type="PANTHER" id="PTHR40083:SF1">
    <property type="entry name" value="UPF0122 PROTEIN YLXM"/>
    <property type="match status" value="1"/>
</dbReference>
<dbReference type="Pfam" id="PF04297">
    <property type="entry name" value="UPF0122"/>
    <property type="match status" value="1"/>
</dbReference>
<dbReference type="SUPFAM" id="SSF88659">
    <property type="entry name" value="Sigma3 and sigma4 domains of RNA polymerase sigma factors"/>
    <property type="match status" value="1"/>
</dbReference>
<comment type="function">
    <text evidence="1">Might take part in the signal recognition particle (SRP) pathway. This is inferred from the conservation of its genetic proximity to ftsY/ffh. May be a regulatory protein.</text>
</comment>
<comment type="similarity">
    <text evidence="1">Belongs to the UPF0122 family.</text>
</comment>
<reference key="1">
    <citation type="journal article" date="2007" name="J. Bacteriol.">
        <title>Complete genome of acute rheumatic fever-associated serotype M5 Streptococcus pyogenes strain Manfredo.</title>
        <authorList>
            <person name="Holden M.T.G."/>
            <person name="Scott A."/>
            <person name="Cherevach I."/>
            <person name="Chillingworth T."/>
            <person name="Churcher C."/>
            <person name="Cronin A."/>
            <person name="Dowd L."/>
            <person name="Feltwell T."/>
            <person name="Hamlin N."/>
            <person name="Holroyd S."/>
            <person name="Jagels K."/>
            <person name="Moule S."/>
            <person name="Mungall K."/>
            <person name="Quail M.A."/>
            <person name="Price C."/>
            <person name="Rabbinowitsch E."/>
            <person name="Sharp S."/>
            <person name="Skelton J."/>
            <person name="Whitehead S."/>
            <person name="Barrell B.G."/>
            <person name="Kehoe M."/>
            <person name="Parkhill J."/>
        </authorList>
    </citation>
    <scope>NUCLEOTIDE SEQUENCE [LARGE SCALE GENOMIC DNA]</scope>
    <source>
        <strain>Manfredo</strain>
    </source>
</reference>
<name>Y882_STRPG</name>